<comment type="similarity">
    <text evidence="1">Belongs to the eukaryotic ribosomal protein eS1 family.</text>
</comment>
<name>RS3A_METVS</name>
<feature type="chain" id="PRO_1000005196" description="Small ribosomal subunit protein eS1">
    <location>
        <begin position="1"/>
        <end position="220"/>
    </location>
</feature>
<protein>
    <recommendedName>
        <fullName evidence="1">Small ribosomal subunit protein eS1</fullName>
    </recommendedName>
    <alternativeName>
        <fullName evidence="2">30S ribosomal protein S3Ae</fullName>
    </alternativeName>
    <alternativeName>
        <fullName evidence="1">Ribosomal protein S1e</fullName>
    </alternativeName>
</protein>
<proteinExistence type="inferred from homology"/>
<organism>
    <name type="scientific">Methanococcus vannielii (strain ATCC 35089 / DSM 1224 / JCM 13029 / OCM 148 / SB)</name>
    <dbReference type="NCBI Taxonomy" id="406327"/>
    <lineage>
        <taxon>Archaea</taxon>
        <taxon>Methanobacteriati</taxon>
        <taxon>Methanobacteriota</taxon>
        <taxon>Methanomada group</taxon>
        <taxon>Methanococci</taxon>
        <taxon>Methanococcales</taxon>
        <taxon>Methanococcaceae</taxon>
        <taxon>Methanococcus</taxon>
    </lineage>
</organism>
<gene>
    <name evidence="1" type="primary">rps3ae</name>
    <name type="ordered locus">Mevan_1522</name>
</gene>
<dbReference type="EMBL" id="CP000742">
    <property type="protein sequence ID" value="ABR55416.1"/>
    <property type="molecule type" value="Genomic_DNA"/>
</dbReference>
<dbReference type="RefSeq" id="WP_012066330.1">
    <property type="nucleotide sequence ID" value="NC_009634.1"/>
</dbReference>
<dbReference type="SMR" id="A6USE4"/>
<dbReference type="STRING" id="406327.Mevan_1522"/>
<dbReference type="GeneID" id="5324467"/>
<dbReference type="KEGG" id="mvn:Mevan_1522"/>
<dbReference type="eggNOG" id="arCOG04186">
    <property type="taxonomic scope" value="Archaea"/>
</dbReference>
<dbReference type="HOGENOM" id="CLU_062507_1_0_2"/>
<dbReference type="OrthoDB" id="30639at2157"/>
<dbReference type="Proteomes" id="UP000001107">
    <property type="component" value="Chromosome"/>
</dbReference>
<dbReference type="GO" id="GO:1990904">
    <property type="term" value="C:ribonucleoprotein complex"/>
    <property type="evidence" value="ECO:0007669"/>
    <property type="project" value="UniProtKB-KW"/>
</dbReference>
<dbReference type="GO" id="GO:0005840">
    <property type="term" value="C:ribosome"/>
    <property type="evidence" value="ECO:0007669"/>
    <property type="project" value="UniProtKB-KW"/>
</dbReference>
<dbReference type="GO" id="GO:0003735">
    <property type="term" value="F:structural constituent of ribosome"/>
    <property type="evidence" value="ECO:0007669"/>
    <property type="project" value="InterPro"/>
</dbReference>
<dbReference type="GO" id="GO:0006412">
    <property type="term" value="P:translation"/>
    <property type="evidence" value="ECO:0007669"/>
    <property type="project" value="UniProtKB-UniRule"/>
</dbReference>
<dbReference type="HAMAP" id="MF_00359">
    <property type="entry name" value="Ribosomal_eS1"/>
    <property type="match status" value="1"/>
</dbReference>
<dbReference type="InterPro" id="IPR001593">
    <property type="entry name" value="Ribosomal_eS1"/>
</dbReference>
<dbReference type="InterPro" id="IPR030838">
    <property type="entry name" value="Ribosomal_eS1_arc"/>
</dbReference>
<dbReference type="InterPro" id="IPR018281">
    <property type="entry name" value="Ribosomal_eS1_CS"/>
</dbReference>
<dbReference type="NCBIfam" id="NF003142">
    <property type="entry name" value="PRK04057.1"/>
    <property type="match status" value="1"/>
</dbReference>
<dbReference type="PANTHER" id="PTHR11830">
    <property type="entry name" value="40S RIBOSOMAL PROTEIN S3A"/>
    <property type="match status" value="1"/>
</dbReference>
<dbReference type="Pfam" id="PF01015">
    <property type="entry name" value="Ribosomal_S3Ae"/>
    <property type="match status" value="1"/>
</dbReference>
<dbReference type="SMART" id="SM01397">
    <property type="entry name" value="Ribosomal_S3Ae"/>
    <property type="match status" value="1"/>
</dbReference>
<dbReference type="PROSITE" id="PS01191">
    <property type="entry name" value="RIBOSOMAL_S3AE"/>
    <property type="match status" value="1"/>
</dbReference>
<accession>A6USE4</accession>
<evidence type="ECO:0000255" key="1">
    <source>
        <dbReference type="HAMAP-Rule" id="MF_00359"/>
    </source>
</evidence>
<evidence type="ECO:0000305" key="2"/>
<keyword id="KW-0687">Ribonucleoprotein</keyword>
<keyword id="KW-0689">Ribosomal protein</keyword>
<sequence>MARMKARSAKGKRVAKDTWKSKVWYNIYTPQSFGGDVIGQTPANDPSALMGRISEISLRDLTNEHSKHMTRMYFKVDGVSGNNAITQFVGHDTTREYLKSQIRRRRSKINVIIDVRTKDGFKVRVKALVLTAVRARDYHKTEIRVKMEQIIKEMANETAFAEFVHAMVMGGVGSKIYSECKKMFPLKRVEIFKSEVLEFGKAVLEVTPEAQEAVEGEEKQ</sequence>
<reference key="1">
    <citation type="submission" date="2007-06" db="EMBL/GenBank/DDBJ databases">
        <title>Complete sequence of Methanococcus vannielii SB.</title>
        <authorList>
            <consortium name="US DOE Joint Genome Institute"/>
            <person name="Copeland A."/>
            <person name="Lucas S."/>
            <person name="Lapidus A."/>
            <person name="Barry K."/>
            <person name="Glavina del Rio T."/>
            <person name="Dalin E."/>
            <person name="Tice H."/>
            <person name="Pitluck S."/>
            <person name="Chain P."/>
            <person name="Malfatti S."/>
            <person name="Shin M."/>
            <person name="Vergez L."/>
            <person name="Schmutz J."/>
            <person name="Larimer F."/>
            <person name="Land M."/>
            <person name="Hauser L."/>
            <person name="Kyrpides N."/>
            <person name="Anderson I."/>
            <person name="Sieprawska-Lupa M."/>
            <person name="Whitman W.B."/>
            <person name="Richardson P."/>
        </authorList>
    </citation>
    <scope>NUCLEOTIDE SEQUENCE [LARGE SCALE GENOMIC DNA]</scope>
    <source>
        <strain>ATCC 35089 / DSM 1224 / JCM 13029 / OCM 148 / SB</strain>
    </source>
</reference>